<feature type="chain" id="PRO_0000402387" description="Capsid protein alpha">
    <location>
        <begin position="1"/>
        <end position="403"/>
    </location>
</feature>
<feature type="chain" id="PRO_0000039192" description="Capsid protein beta">
    <location>
        <begin position="1"/>
        <end position="359"/>
    </location>
</feature>
<feature type="chain" id="PRO_0000039193" description="Membrane-lytic peptide gamma">
    <location>
        <begin position="360"/>
        <end position="403"/>
    </location>
</feature>
<feature type="region of interest" description="Disordered" evidence="3">
    <location>
        <begin position="1"/>
        <end position="32"/>
    </location>
</feature>
<feature type="compositionally biased region" description="Low complexity" evidence="3">
    <location>
        <begin position="9"/>
        <end position="24"/>
    </location>
</feature>
<feature type="active site" evidence="2">
    <location>
        <position position="61"/>
    </location>
</feature>
<feature type="binding site" evidence="2">
    <location>
        <position position="157"/>
    </location>
    <ligand>
        <name>Ca(2+)</name>
        <dbReference type="ChEBI" id="CHEBI:29108"/>
        <label>1</label>
    </ligand>
</feature>
<feature type="binding site" evidence="2">
    <location>
        <position position="157"/>
    </location>
    <ligand>
        <name>Ca(2+)</name>
        <dbReference type="ChEBI" id="CHEBI:29108"/>
        <label>2</label>
    </ligand>
</feature>
<feature type="binding site" evidence="2">
    <location>
        <position position="157"/>
    </location>
    <ligand>
        <name>Ca(2+)</name>
        <dbReference type="ChEBI" id="CHEBI:29108"/>
        <label>3</label>
    </ligand>
</feature>
<feature type="binding site" evidence="2">
    <location>
        <position position="217"/>
    </location>
    <ligand>
        <name>Ca(2+)</name>
        <dbReference type="ChEBI" id="CHEBI:29108"/>
        <label>2</label>
    </ligand>
</feature>
<feature type="binding site" evidence="2">
    <location>
        <position position="217"/>
    </location>
    <ligand>
        <name>Ca(2+)</name>
        <dbReference type="ChEBI" id="CHEBI:29108"/>
        <label>3</label>
    </ligand>
</feature>
<feature type="binding site" evidence="2">
    <location>
        <position position="217"/>
    </location>
    <ligand>
        <name>Ca(2+)</name>
        <dbReference type="ChEBI" id="CHEBI:29108"/>
        <label>4</label>
    </ligand>
</feature>
<feature type="binding site" evidence="2">
    <location>
        <position position="245"/>
    </location>
    <ligand>
        <name>Ca(2+)</name>
        <dbReference type="ChEBI" id="CHEBI:29108"/>
        <label>5</label>
    </ligand>
</feature>
<feature type="binding site" evidence="2">
    <location>
        <position position="269"/>
    </location>
    <ligand>
        <name>Ca(2+)</name>
        <dbReference type="ChEBI" id="CHEBI:29108"/>
        <label>2</label>
    </ligand>
</feature>
<feature type="binding site" evidence="2">
    <location>
        <position position="269"/>
    </location>
    <ligand>
        <name>Ca(2+)</name>
        <dbReference type="ChEBI" id="CHEBI:29108"/>
        <label>4</label>
    </ligand>
</feature>
<feature type="site" description="Cleavage; by autolysis" evidence="2">
    <location>
        <begin position="359"/>
        <end position="360"/>
    </location>
</feature>
<feature type="disulfide bond" evidence="1">
    <location>
        <begin position="55"/>
        <end position="314"/>
    </location>
</feature>
<accession>P12869</accession>
<organismHost>
    <name type="scientific">Hepialidae</name>
    <name type="common">ghost moths</name>
    <dbReference type="NCBI Taxonomy" id="41021"/>
</organismHost>
<gene>
    <name type="primary">alpha</name>
</gene>
<sequence>MTPRRQQRPKGQLAKAKQAKQPLARSRRPRRRRRAAITQNNLMMLSEPGLSFLKCAFASPDSNTDPGKGIPDNFEGKVLSQKNVYTETGVNFSGATTQNVDTYIIVLPTPGVAFWRCIKTATAPAQPAALTTTDVFTAVPFPDFTSLFGTTATNRADQVAAFRYASMNFGLYPTCNSTQYNGGISVWKGAVQMSTTQYPLDTTPESSQLVHAITGLESALKVGDENYSESFIDGVFTQSINGNAEFPFYPILEGVQTLPGQNVTVAQAGMPFSLDAGAATVAGFTGIGGMDAIFIKVTAAAGSVNTATIKTWACIEYRPNTNTALYKYAHDSPAEDIIALQQYRKVYKSLPVAVRAKLNANMWERVKRLLKAGLVAASYVPGPVGGIATGVQHIGDLIAELSF</sequence>
<reference key="1">
    <citation type="journal article" date="1989" name="Nucleic Acids Res.">
        <title>Nucleotide sequences of three Nodavirus RNA2's: the messengers for their coat protein precursors.</title>
        <authorList>
            <person name="Dasgupta R."/>
            <person name="Sgro J.-Y."/>
        </authorList>
    </citation>
    <scope>NUCLEOTIDE SEQUENCE [GENOMIC RNA]</scope>
</reference>
<reference key="2">
    <citation type="journal article" date="1990" name="J. Mol. Biol.">
        <title>Structural homology among four nodaviruses as deduced by sequencing and X-ray crystallography.</title>
        <authorList>
            <person name="Kaesberg P."/>
            <person name="Dasgupta R."/>
            <person name="Sgro J.-Y."/>
            <person name="Wery J.-P."/>
            <person name="Selling B.H."/>
            <person name="Hosur M.V."/>
            <person name="Johnson J.E."/>
        </authorList>
    </citation>
    <scope>SIMILARITY TO OTHER NODAVIRUSES</scope>
</reference>
<proteinExistence type="inferred from homology"/>
<dbReference type="EC" id="3.4.23.44" evidence="2"/>
<dbReference type="EMBL" id="X15960">
    <property type="protein sequence ID" value="CAA34082.1"/>
    <property type="molecule type" value="Genomic_RNA"/>
</dbReference>
<dbReference type="PIR" id="A34011">
    <property type="entry name" value="VCBBBL"/>
</dbReference>
<dbReference type="RefSeq" id="NP_689443.1">
    <property type="nucleotide sequence ID" value="NC_004145.1"/>
</dbReference>
<dbReference type="SMR" id="P12869"/>
<dbReference type="MEROPS" id="N01.001"/>
<dbReference type="KEGG" id="vg:956658"/>
<dbReference type="OrthoDB" id="10195at10239"/>
<dbReference type="Proteomes" id="UP000204043">
    <property type="component" value="Genome"/>
</dbReference>
<dbReference type="GO" id="GO:0039617">
    <property type="term" value="C:T=3 icosahedral viral capsid"/>
    <property type="evidence" value="ECO:0007669"/>
    <property type="project" value="UniProtKB-KW"/>
</dbReference>
<dbReference type="GO" id="GO:0004190">
    <property type="term" value="F:aspartic-type endopeptidase activity"/>
    <property type="evidence" value="ECO:0007669"/>
    <property type="project" value="UniProtKB-KW"/>
</dbReference>
<dbReference type="GO" id="GO:0046872">
    <property type="term" value="F:metal ion binding"/>
    <property type="evidence" value="ECO:0007669"/>
    <property type="project" value="UniProtKB-KW"/>
</dbReference>
<dbReference type="GO" id="GO:0006508">
    <property type="term" value="P:proteolysis"/>
    <property type="evidence" value="ECO:0007669"/>
    <property type="project" value="UniProtKB-KW"/>
</dbReference>
<dbReference type="GO" id="GO:0140267">
    <property type="term" value="P:symbiont entry into host cell via permeabilization of host membrane"/>
    <property type="evidence" value="ECO:0007669"/>
    <property type="project" value="UniProtKB-KW"/>
</dbReference>
<dbReference type="Gene3D" id="2.60.120.20">
    <property type="match status" value="1"/>
</dbReference>
<dbReference type="InterPro" id="IPR000696">
    <property type="entry name" value="Peptidase_A6"/>
</dbReference>
<dbReference type="InterPro" id="IPR029053">
    <property type="entry name" value="Viral_coat"/>
</dbReference>
<dbReference type="Pfam" id="PF01829">
    <property type="entry name" value="Peptidase_A6"/>
    <property type="match status" value="1"/>
</dbReference>
<dbReference type="PRINTS" id="PR00863">
    <property type="entry name" value="NODAVIRPTASE"/>
</dbReference>
<dbReference type="SUPFAM" id="SSF88633">
    <property type="entry name" value="Positive stranded ssRNA viruses"/>
    <property type="match status" value="1"/>
</dbReference>
<organism>
    <name type="scientific">Boolarra virus</name>
    <name type="common">BoV</name>
    <dbReference type="NCBI Taxonomy" id="12286"/>
    <lineage>
        <taxon>Viruses</taxon>
        <taxon>Riboviria</taxon>
        <taxon>Orthornavirae</taxon>
        <taxon>Kitrinoviricota</taxon>
        <taxon>Magsaviricetes</taxon>
        <taxon>Nodamuvirales</taxon>
        <taxon>Nodaviridae</taxon>
        <taxon>Alphanodavirus</taxon>
    </lineage>
</organism>
<evidence type="ECO:0000250" key="1"/>
<evidence type="ECO:0000250" key="2">
    <source>
        <dbReference type="UniProtKB" id="P12870"/>
    </source>
</evidence>
<evidence type="ECO:0000256" key="3">
    <source>
        <dbReference type="SAM" id="MobiDB-lite"/>
    </source>
</evidence>
<evidence type="ECO:0000305" key="4"/>
<protein>
    <recommendedName>
        <fullName>Capsid protein alpha</fullName>
        <ecNumber evidence="2">3.4.23.44</ecNumber>
    </recommendedName>
    <component>
        <recommendedName>
            <fullName>Capsid protein beta</fullName>
        </recommendedName>
        <alternativeName>
            <fullName>Coat protein beta</fullName>
        </alternativeName>
        <alternativeName>
            <fullName>Nodavirus endopeptidase</fullName>
        </alternativeName>
    </component>
    <component>
        <recommendedName>
            <fullName>Membrane-lytic peptide gamma</fullName>
        </recommendedName>
        <alternativeName>
            <fullName>Coat protein gamma</fullName>
        </alternativeName>
    </component>
</protein>
<keyword id="KW-0064">Aspartyl protease</keyword>
<keyword id="KW-0106">Calcium</keyword>
<keyword id="KW-0167">Capsid protein</keyword>
<keyword id="KW-1015">Disulfide bond</keyword>
<keyword id="KW-0378">Hydrolase</keyword>
<keyword id="KW-0479">Metal-binding</keyword>
<keyword id="KW-0645">Protease</keyword>
<keyword id="KW-1142">T=3 icosahedral capsid protein</keyword>
<keyword id="KW-1162">Viral penetration into host cytoplasm</keyword>
<keyword id="KW-1173">Viral penetration via permeabilization of host membrane</keyword>
<keyword id="KW-0946">Virion</keyword>
<keyword id="KW-1160">Virus entry into host cell</keyword>
<comment type="function">
    <molecule>Capsid protein alpha</molecule>
    <text evidence="2">Capsid protein alpha self-assembles to form an icosahedral procapsid with a T=3 symmetry, about 30 nm in diameter, and consisting of 60 capsid proteins trimers. In addition, 240 calcium ions are incorporated per capsid during assembly. The capsid encapsulates the two genomic RNAs. Capsid maturation occurs via autoproteolytic cleavage of capsid protein alpha generating capsid protein beta and the membrane-active peptide gamma.</text>
</comment>
<comment type="function">
    <molecule>Membrane-lytic peptide gamma</molecule>
    <text evidence="2">Membrane-permeabilizing peptide produced by virus maturation, thereby creating the infectious virion. After endocytosis into the host cell, peptide gamma is probably exposed in endosomes, where it permeabilizes the endosomal membrane, facilitating translocation of viral capsid or RNA into the cytoplasm. Involved in specific recognition and packaging of viral RNA during assembly.</text>
</comment>
<comment type="catalytic activity">
    <molecule>Capsid protein beta</molecule>
    <reaction evidence="2">
        <text>Hydrolysis of an asparaginyl bond involved in the maturation of the structural protein of the virus, typically -Asn-|-Ala- or -Asn-|-Phe-.</text>
        <dbReference type="EC" id="3.4.23.44"/>
    </reaction>
</comment>
<comment type="subcellular location">
    <molecule>Capsid protein beta</molecule>
    <subcellularLocation>
        <location evidence="4">Virion</location>
    </subcellularLocation>
</comment>
<comment type="subcellular location">
    <molecule>Membrane-lytic peptide gamma</molecule>
    <subcellularLocation>
        <location evidence="4">Virion</location>
    </subcellularLocation>
    <text evidence="4">Located inside the capsid and probably externalized in early endosomes.</text>
</comment>
<comment type="PTM">
    <molecule>Capsid protein alpha</molecule>
    <text evidence="2">Capsid protein alpha autocatalytically maturates into capsid protein beta and peptide gamma.</text>
</comment>
<comment type="similarity">
    <text evidence="4">Belongs to the peptidase A6 family.</text>
</comment>
<name>CAPSD_BOOLV</name>